<keyword id="KW-0067">ATP-binding</keyword>
<keyword id="KW-0418">Kinase</keyword>
<keyword id="KW-0547">Nucleotide-binding</keyword>
<keyword id="KW-1185">Reference proteome</keyword>
<keyword id="KW-0808">Transferase</keyword>
<reference key="1">
    <citation type="journal article" date="2000" name="Nature">
        <title>DNA sequence of both chromosomes of the cholera pathogen Vibrio cholerae.</title>
        <authorList>
            <person name="Heidelberg J.F."/>
            <person name="Eisen J.A."/>
            <person name="Nelson W.C."/>
            <person name="Clayton R.A."/>
            <person name="Gwinn M.L."/>
            <person name="Dodson R.J."/>
            <person name="Haft D.H."/>
            <person name="Hickey E.K."/>
            <person name="Peterson J.D."/>
            <person name="Umayam L.A."/>
            <person name="Gill S.R."/>
            <person name="Nelson K.E."/>
            <person name="Read T.D."/>
            <person name="Tettelin H."/>
            <person name="Richardson D.L."/>
            <person name="Ermolaeva M.D."/>
            <person name="Vamathevan J.J."/>
            <person name="Bass S."/>
            <person name="Qin H."/>
            <person name="Dragoi I."/>
            <person name="Sellers P."/>
            <person name="McDonald L.A."/>
            <person name="Utterback T.R."/>
            <person name="Fleischmann R.D."/>
            <person name="Nierman W.C."/>
            <person name="White O."/>
            <person name="Salzberg S.L."/>
            <person name="Smith H.O."/>
            <person name="Colwell R.R."/>
            <person name="Mekalanos J.J."/>
            <person name="Venter J.C."/>
            <person name="Fraser C.M."/>
        </authorList>
    </citation>
    <scope>NUCLEOTIDE SEQUENCE [LARGE SCALE GENOMIC DNA]</scope>
    <source>
        <strain>ATCC 39315 / El Tor Inaba N16961</strain>
    </source>
</reference>
<reference key="2">
    <citation type="journal article" date="2021" name="Nucleic Acids Res.">
        <title>Vibrio cholerae FruR facilitates binding of RNA polymerase to the fru promoter in the presence of fructose 1-phosphate.</title>
        <authorList>
            <person name="Yoon C.K."/>
            <person name="Kang D."/>
            <person name="Kim M.K."/>
            <person name="Seok Y.J."/>
        </authorList>
    </citation>
    <scope>INDUCTION</scope>
    <scope>DISRUPTION PHENOTYPE</scope>
    <source>
        <strain>ATCC 39315 / El Tor Inaba N16961</strain>
    </source>
</reference>
<reference key="3">
    <citation type="journal article" date="2021" name="J. Bacteriol.">
        <title>Cra and cAMP receptor protein have opposing roles in the regulation of fruB in Vibrio cholerae.</title>
        <authorList>
            <person name="Beck C."/>
            <person name="Perry S."/>
            <person name="Stoebel D.M."/>
            <person name="Liu J.M."/>
        </authorList>
    </citation>
    <scope>INDUCTION</scope>
    <source>
        <strain>ATCC 39315 / El Tor Inaba N16961</strain>
    </source>
</reference>
<comment type="function">
    <text evidence="2">Catalyzes the ATP-dependent phosphorylation of fructose-l-phosphate to fructose-l,6-bisphosphate.</text>
</comment>
<comment type="catalytic activity">
    <reaction evidence="2">
        <text>beta-D-fructose 1-phosphate + ATP = beta-D-fructose 1,6-bisphosphate + ADP + H(+)</text>
        <dbReference type="Rhea" id="RHEA:14213"/>
        <dbReference type="ChEBI" id="CHEBI:15378"/>
        <dbReference type="ChEBI" id="CHEBI:30616"/>
        <dbReference type="ChEBI" id="CHEBI:32966"/>
        <dbReference type="ChEBI" id="CHEBI:138881"/>
        <dbReference type="ChEBI" id="CHEBI:456216"/>
        <dbReference type="EC" id="2.7.1.56"/>
    </reaction>
</comment>
<comment type="induction">
    <text evidence="3 4">Part of the fruBKA (fru) operon, which is induced in the presence of fructose via the FruR (Cra) regulatory protein (PubMed:33476373). Transcription is repressed by FruR in the absence of fructose (PubMed:33649152). CRP activates expression of the fru operon in the absence of glucose (PubMed:33649152). The two regulators can work independently to control the expression of the operon depending on carbon source availability (PubMed:33649152).</text>
</comment>
<comment type="disruption phenotype">
    <text evidence="3">Does not affect growth on glucose. Mutant shows a severe growth defect on fructose.</text>
</comment>
<comment type="similarity">
    <text evidence="6">Belongs to the carbohydrate kinase PfkB family.</text>
</comment>
<feature type="chain" id="PRO_0000453371" description="1-phosphofructokinase">
    <location>
        <begin position="1"/>
        <end position="317"/>
    </location>
</feature>
<feature type="active site" description="Proton acceptor" evidence="1">
    <location>
        <position position="255"/>
    </location>
</feature>
<feature type="binding site" evidence="1">
    <location>
        <begin position="223"/>
        <end position="228"/>
    </location>
    <ligand>
        <name>ATP</name>
        <dbReference type="ChEBI" id="CHEBI:30616"/>
    </ligand>
</feature>
<feature type="binding site" evidence="1">
    <location>
        <begin position="254"/>
        <end position="255"/>
    </location>
    <ligand>
        <name>ATP</name>
        <dbReference type="ChEBI" id="CHEBI:30616"/>
    </ligand>
</feature>
<evidence type="ECO:0000250" key="1">
    <source>
        <dbReference type="UniProtKB" id="P0A9J6"/>
    </source>
</evidence>
<evidence type="ECO:0000250" key="2">
    <source>
        <dbReference type="UniProtKB" id="P0AEW9"/>
    </source>
</evidence>
<evidence type="ECO:0000269" key="3">
    <source>
    </source>
</evidence>
<evidence type="ECO:0000269" key="4">
    <source>
    </source>
</evidence>
<evidence type="ECO:0000303" key="5">
    <source>
    </source>
</evidence>
<evidence type="ECO:0000305" key="6"/>
<evidence type="ECO:0000312" key="7">
    <source>
        <dbReference type="EMBL" id="AAF96420.1"/>
    </source>
</evidence>
<dbReference type="EC" id="2.7.1.56" evidence="2"/>
<dbReference type="EMBL" id="AE003853">
    <property type="protein sequence ID" value="AAF96420.1"/>
    <property type="molecule type" value="Genomic_DNA"/>
</dbReference>
<dbReference type="PIR" id="C82450">
    <property type="entry name" value="C82450"/>
</dbReference>
<dbReference type="RefSeq" id="NP_232908.1">
    <property type="nucleotide sequence ID" value="NC_002506.1"/>
</dbReference>
<dbReference type="SMR" id="Q9KM71"/>
<dbReference type="STRING" id="243277.VC_A0517"/>
<dbReference type="DNASU" id="2612820"/>
<dbReference type="EnsemblBacteria" id="AAF96420">
    <property type="protein sequence ID" value="AAF96420"/>
    <property type="gene ID" value="VC_A0517"/>
</dbReference>
<dbReference type="KEGG" id="vch:VC_A0517"/>
<dbReference type="PATRIC" id="fig|243277.26.peg.3143"/>
<dbReference type="eggNOG" id="COG1105">
    <property type="taxonomic scope" value="Bacteria"/>
</dbReference>
<dbReference type="HOGENOM" id="CLU_050013_0_1_6"/>
<dbReference type="Proteomes" id="UP000000584">
    <property type="component" value="Chromosome 2"/>
</dbReference>
<dbReference type="GO" id="GO:0005829">
    <property type="term" value="C:cytosol"/>
    <property type="evidence" value="ECO:0000318"/>
    <property type="project" value="GO_Central"/>
</dbReference>
<dbReference type="GO" id="GO:0008662">
    <property type="term" value="F:1-phosphofructokinase activity"/>
    <property type="evidence" value="ECO:0007669"/>
    <property type="project" value="UniProtKB-EC"/>
</dbReference>
<dbReference type="GO" id="GO:0005524">
    <property type="term" value="F:ATP binding"/>
    <property type="evidence" value="ECO:0007669"/>
    <property type="project" value="UniProtKB-KW"/>
</dbReference>
<dbReference type="GO" id="GO:0008443">
    <property type="term" value="F:phosphofructokinase activity"/>
    <property type="evidence" value="ECO:0000318"/>
    <property type="project" value="GO_Central"/>
</dbReference>
<dbReference type="CDD" id="cd01164">
    <property type="entry name" value="FruK_PfkB_like"/>
    <property type="match status" value="1"/>
</dbReference>
<dbReference type="FunFam" id="3.40.1190.20:FF:000001">
    <property type="entry name" value="Phosphofructokinase"/>
    <property type="match status" value="1"/>
</dbReference>
<dbReference type="Gene3D" id="3.40.1190.20">
    <property type="match status" value="1"/>
</dbReference>
<dbReference type="InterPro" id="IPR022463">
    <property type="entry name" value="1-PFruKinase"/>
</dbReference>
<dbReference type="InterPro" id="IPR002173">
    <property type="entry name" value="Carboh/pur_kinase_PfkB_CS"/>
</dbReference>
<dbReference type="InterPro" id="IPR011611">
    <property type="entry name" value="PfkB_dom"/>
</dbReference>
<dbReference type="InterPro" id="IPR029056">
    <property type="entry name" value="Ribokinase-like"/>
</dbReference>
<dbReference type="InterPro" id="IPR017583">
    <property type="entry name" value="Tagatose/fructose_Pkinase"/>
</dbReference>
<dbReference type="NCBIfam" id="TIGR03168">
    <property type="entry name" value="1-PFK"/>
    <property type="match status" value="1"/>
</dbReference>
<dbReference type="NCBIfam" id="TIGR03828">
    <property type="entry name" value="pfkB"/>
    <property type="match status" value="1"/>
</dbReference>
<dbReference type="PANTHER" id="PTHR46566:SF5">
    <property type="entry name" value="1-PHOSPHOFRUCTOKINASE"/>
    <property type="match status" value="1"/>
</dbReference>
<dbReference type="PANTHER" id="PTHR46566">
    <property type="entry name" value="1-PHOSPHOFRUCTOKINASE-RELATED"/>
    <property type="match status" value="1"/>
</dbReference>
<dbReference type="Pfam" id="PF00294">
    <property type="entry name" value="PfkB"/>
    <property type="match status" value="1"/>
</dbReference>
<dbReference type="PIRSF" id="PIRSF000535">
    <property type="entry name" value="1PFK/6PFK/LacC"/>
    <property type="match status" value="1"/>
</dbReference>
<dbReference type="SUPFAM" id="SSF53613">
    <property type="entry name" value="Ribokinase-like"/>
    <property type="match status" value="1"/>
</dbReference>
<dbReference type="PROSITE" id="PS00583">
    <property type="entry name" value="PFKB_KINASES_1"/>
    <property type="match status" value="1"/>
</dbReference>
<organism>
    <name type="scientific">Vibrio cholerae serotype O1 (strain ATCC 39315 / El Tor Inaba N16961)</name>
    <dbReference type="NCBI Taxonomy" id="243277"/>
    <lineage>
        <taxon>Bacteria</taxon>
        <taxon>Pseudomonadati</taxon>
        <taxon>Pseudomonadota</taxon>
        <taxon>Gammaproteobacteria</taxon>
        <taxon>Vibrionales</taxon>
        <taxon>Vibrionaceae</taxon>
        <taxon>Vibrio</taxon>
    </lineage>
</organism>
<name>K1PF_VIBCH</name>
<sequence>MTKKVVTITLNPALDLTGSVNQLNVGSVSLVGQSSLHAAGKGVNVAKVLSELGAQVTVTGFLGRDNQELFCQLFEQLGVQDAFIRIAGATRINVKLVEQSGAVSDINFPGIQVTEADIEAFEATLQRLAQDHDYFVLAGSLPQGISPQRCAGWIAQLRSMNKKVLFDSSRDALLAGLDAKPWLIKPNDEELSQWCGRELTTLTDCQQAAAELAQKQIENIVISMGAEGVMWLHENQWLHAKPPKMQVVSTVGAGDTLVAGLCWGHMQRMEKESLLRFATALSALAVTQVGVGLGDREQLNTLQQQIQVSALYPTMGA</sequence>
<accession>Q9KM71</accession>
<protein>
    <recommendedName>
        <fullName evidence="2">1-phosphofructokinase</fullName>
        <ecNumber evidence="2">2.7.1.56</ecNumber>
    </recommendedName>
    <alternativeName>
        <fullName evidence="2">Fructose 1-phosphate kinase</fullName>
        <shortName evidence="2">Fru1PK</shortName>
    </alternativeName>
</protein>
<proteinExistence type="evidence at transcript level"/>
<gene>
    <name evidence="5" type="primary">fruk</name>
    <name evidence="7" type="ordered locus">VC_A0517</name>
</gene>